<proteinExistence type="evidence at transcript level"/>
<name>DRC7_PANTR</name>
<organism>
    <name type="scientific">Pan troglodytes</name>
    <name type="common">Chimpanzee</name>
    <dbReference type="NCBI Taxonomy" id="9598"/>
    <lineage>
        <taxon>Eukaryota</taxon>
        <taxon>Metazoa</taxon>
        <taxon>Chordata</taxon>
        <taxon>Craniata</taxon>
        <taxon>Vertebrata</taxon>
        <taxon>Euteleostomi</taxon>
        <taxon>Mammalia</taxon>
        <taxon>Eutheria</taxon>
        <taxon>Euarchontoglires</taxon>
        <taxon>Primates</taxon>
        <taxon>Haplorrhini</taxon>
        <taxon>Catarrhini</taxon>
        <taxon>Hominidae</taxon>
        <taxon>Pan</taxon>
    </lineage>
</organism>
<keyword id="KW-0966">Cell projection</keyword>
<keyword id="KW-0969">Cilium</keyword>
<keyword id="KW-0175">Coiled coil</keyword>
<keyword id="KW-0963">Cytoplasm</keyword>
<keyword id="KW-0206">Cytoskeleton</keyword>
<keyword id="KW-0221">Differentiation</keyword>
<keyword id="KW-0282">Flagellum</keyword>
<keyword id="KW-1185">Reference proteome</keyword>
<keyword id="KW-0744">Spermatogenesis</keyword>
<evidence type="ECO:0000250" key="1">
    <source>
        <dbReference type="UniProtKB" id="A8JAM0"/>
    </source>
</evidence>
<evidence type="ECO:0000250" key="2">
    <source>
        <dbReference type="UniProtKB" id="Q6V3W6"/>
    </source>
</evidence>
<evidence type="ECO:0000255" key="3"/>
<evidence type="ECO:0000256" key="4">
    <source>
        <dbReference type="SAM" id="MobiDB-lite"/>
    </source>
</evidence>
<evidence type="ECO:0000305" key="5"/>
<accession>G2HE57</accession>
<gene>
    <name type="primary">DRC7</name>
    <name type="synonym">CCDC135</name>
</gene>
<sequence length="874" mass="103454">MEVLREKVEEEEEAEREEAAERAEWARMEKMMRPVEVRKEENTLKQETLRDLEKKLSEIQITVSAELPAFTKDTIDISKLPVSYKTNTPKEEHLLQVADNFSCQYSHLCPDRVPLFLHPLNECEVPKFVSTTLRPTLMPYPELYNWDSCAQFVSDFLTMVPLPDPLKPPSHLYSSTTVLKYQKGNCFDFSTLLCSMLIGSGYDAYCVNGYGSLDLCHMDLTREVCPLTVKPKETIKKEEKVLPKKYTIKPPRDLCSRFEQEQEVKKQQEIRAQEKKRLREEEERLMEAEKAKPDALHGLRVHSWVLVLSGKREVPENFFIDPFTGHSYSTQDEHFLGIESLWNHKNYWINMQDCWNCCKDLIFDLGDPVRWEYMLLGTDKSQLSLTEEDDSGINDEDDVENLGKEDEDKSFDMPHSWVEQIEISPEAFETRCPNGKKVIQYKRAKLEKWAPYLNSNGLVSRLTTYEDLQCTNILEIKEWYQNREDMLELKHINKTTDLKTDYFKPGHPQALRVHSYKSMQPEMDRVIEFYETARVDGLMKREETPRTMTEYYQGRPDFLSYRHASFGPRVKKLTLSSAESNPRPIVKITERFFRNPAKPAEEDVAERVFLVAEERIQLRYHCREDHITASKREFLRRTEVDSKGNKIIMTPDMCISFEVEPMEHTKKLLYQYEAMMHLKREEKLSRHQVWESELEVLEILKLREEEEAAHTLTISIYDTKRNEKSKEYREAMERMMHEEHLRQVETQLDYLAPFLAQLPPGEKLTRWQAVRLKDECLSDFKQRLINKANLIQARFEKETQELQKKQQWYQENQVTLTPEDEDLYLSYCSQAMFRIRILEQRLNRHKELAPLKYLALEEKLYKDPRLGELQKIFA</sequence>
<dbReference type="EMBL" id="AK305021">
    <property type="protein sequence ID" value="BAK62015.1"/>
    <property type="molecule type" value="mRNA"/>
</dbReference>
<dbReference type="RefSeq" id="NP_001267428.1">
    <property type="nucleotide sequence ID" value="NM_001280499.1"/>
</dbReference>
<dbReference type="RefSeq" id="XP_016783962.1">
    <property type="nucleotide sequence ID" value="XM_016928473.2"/>
</dbReference>
<dbReference type="RefSeq" id="XP_016783963.1">
    <property type="nucleotide sequence ID" value="XM_016928474.2"/>
</dbReference>
<dbReference type="SMR" id="G2HE57"/>
<dbReference type="FunCoup" id="G2HE57">
    <property type="interactions" value="73"/>
</dbReference>
<dbReference type="STRING" id="9598.ENSPTRP00000075558"/>
<dbReference type="Ensembl" id="ENSPTRT00000085363.1">
    <property type="protein sequence ID" value="ENSPTRP00000075558.1"/>
    <property type="gene ID" value="ENSPTRG00000008165.5"/>
</dbReference>
<dbReference type="GeneID" id="454123"/>
<dbReference type="KEGG" id="ptr:454123"/>
<dbReference type="CTD" id="84229"/>
<dbReference type="VGNC" id="VGNC:13700">
    <property type="gene designation" value="DRC7"/>
</dbReference>
<dbReference type="GeneTree" id="ENSGT00390000004913"/>
<dbReference type="InParanoid" id="G2HE57"/>
<dbReference type="OrthoDB" id="9734at9604"/>
<dbReference type="Proteomes" id="UP000002277">
    <property type="component" value="Chromosome 16"/>
</dbReference>
<dbReference type="Bgee" id="ENSPTRG00000008165">
    <property type="expression patterns" value="Expressed in testis and 8 other cell types or tissues"/>
</dbReference>
<dbReference type="GO" id="GO:0005737">
    <property type="term" value="C:cytoplasm"/>
    <property type="evidence" value="ECO:0007669"/>
    <property type="project" value="UniProtKB-KW"/>
</dbReference>
<dbReference type="GO" id="GO:0005856">
    <property type="term" value="C:cytoskeleton"/>
    <property type="evidence" value="ECO:0007669"/>
    <property type="project" value="UniProtKB-KW"/>
</dbReference>
<dbReference type="GO" id="GO:0031514">
    <property type="term" value="C:motile cilium"/>
    <property type="evidence" value="ECO:0000318"/>
    <property type="project" value="GO_Central"/>
</dbReference>
<dbReference type="GO" id="GO:0030317">
    <property type="term" value="P:flagellated sperm motility"/>
    <property type="evidence" value="ECO:0000250"/>
    <property type="project" value="UniProtKB"/>
</dbReference>
<dbReference type="GO" id="GO:0007288">
    <property type="term" value="P:sperm axoneme assembly"/>
    <property type="evidence" value="ECO:0000250"/>
    <property type="project" value="UniProtKB"/>
</dbReference>
<dbReference type="GO" id="GO:0007283">
    <property type="term" value="P:spermatogenesis"/>
    <property type="evidence" value="ECO:0000250"/>
    <property type="project" value="UniProtKB"/>
</dbReference>
<dbReference type="InterPro" id="IPR056290">
    <property type="entry name" value="CEPT76/DRC7_peptidase-like_dom"/>
</dbReference>
<dbReference type="InterPro" id="IPR033551">
    <property type="entry name" value="DRC7/lobo"/>
</dbReference>
<dbReference type="InterPro" id="IPR056292">
    <property type="entry name" value="DRC7_C"/>
</dbReference>
<dbReference type="InterPro" id="IPR056291">
    <property type="entry name" value="MORN_DRC7"/>
</dbReference>
<dbReference type="InterPro" id="IPR038765">
    <property type="entry name" value="Papain-like_cys_pep_sf"/>
</dbReference>
<dbReference type="PANTHER" id="PTHR35249">
    <property type="entry name" value="DYNEIN REGULATORY COMPLEX SUBUNIT 7"/>
    <property type="match status" value="1"/>
</dbReference>
<dbReference type="PANTHER" id="PTHR35249:SF2">
    <property type="entry name" value="DYNEIN REGULATORY COMPLEX SUBUNIT 7"/>
    <property type="match status" value="1"/>
</dbReference>
<dbReference type="Pfam" id="PF24656">
    <property type="entry name" value="CEPT76_peptidase"/>
    <property type="match status" value="1"/>
</dbReference>
<dbReference type="Pfam" id="PF24671">
    <property type="entry name" value="DRC7_C"/>
    <property type="match status" value="1"/>
</dbReference>
<dbReference type="Pfam" id="PF24667">
    <property type="entry name" value="MORN_DRC7"/>
    <property type="match status" value="1"/>
</dbReference>
<dbReference type="SUPFAM" id="SSF54001">
    <property type="entry name" value="Cysteine proteinases"/>
    <property type="match status" value="1"/>
</dbReference>
<comment type="function">
    <text evidence="1 2">Component of the nexin-dynein regulatory complex (N-DRC) a key regulator of ciliary/flagellar motility which maintains the alignment and integrity of the distal axoneme and regulates microtubule sliding in motile axonemes (By similarity). Involved in the regulation of flagellar motility (By similarity). Essential for male fertility, sperm head morphogenesis and sperm flagellum formation (By similarity).</text>
</comment>
<comment type="subunit">
    <text evidence="1 2">Component of the nexin-dynein regulatory complex (N-DRC). Interacts with TCTE1/DRC5 (By similarity). Interacts with DRC3 and GAS8/DRC4 (By similarity).</text>
</comment>
<comment type="subcellular location">
    <subcellularLocation>
        <location evidence="1">Cell projection</location>
        <location evidence="1">Cilium</location>
        <location evidence="1">Flagellum</location>
    </subcellularLocation>
    <subcellularLocation>
        <location evidence="1">Cytoplasm</location>
        <location evidence="1">Cytoskeleton</location>
        <location evidence="1">Cilium axoneme</location>
    </subcellularLocation>
    <subcellularLocation>
        <location evidence="1">Cytoplasm</location>
        <location evidence="1">Cytoskeleton</location>
        <location evidence="1">Flagellum axoneme</location>
    </subcellularLocation>
    <text evidence="1">Associated with the outer doublet microtubules (OD).</text>
</comment>
<comment type="tissue specificity">
    <text>Expressed in the testis.</text>
</comment>
<comment type="similarity">
    <text evidence="5">Belongs to the DRC7 family.</text>
</comment>
<reference key="1">
    <citation type="journal article" date="2011" name="Funct. Integr. Genomics">
        <title>Major chimpanzee-specific structural changes in sperm development-associated genes.</title>
        <authorList>
            <person name="Kim R.N."/>
            <person name="Kim D.W."/>
            <person name="Choi S.H."/>
            <person name="Chae S.H."/>
            <person name="Nam S.H."/>
            <person name="Kim D.W."/>
            <person name="Kim A."/>
            <person name="Kang A."/>
            <person name="Park K.H."/>
            <person name="Lee Y.S."/>
            <person name="Hirai M."/>
            <person name="Suzuki Y."/>
            <person name="Sugano S."/>
            <person name="Hashimoto K."/>
            <person name="Kim D.S."/>
            <person name="Park H.S."/>
        </authorList>
    </citation>
    <scope>NUCLEOTIDE SEQUENCE [MRNA]</scope>
    <source>
        <tissue>Testis</tissue>
    </source>
</reference>
<feature type="chain" id="PRO_0000415786" description="Dynein regulatory complex subunit 7">
    <location>
        <begin position="1"/>
        <end position="874"/>
    </location>
</feature>
<feature type="region of interest" description="Disordered" evidence="4">
    <location>
        <begin position="1"/>
        <end position="20"/>
    </location>
</feature>
<feature type="region of interest" description="Disordered" evidence="4">
    <location>
        <begin position="386"/>
        <end position="410"/>
    </location>
</feature>
<feature type="coiled-coil region" evidence="3">
    <location>
        <begin position="1"/>
        <end position="67"/>
    </location>
</feature>
<feature type="coiled-coil region" evidence="3">
    <location>
        <begin position="257"/>
        <end position="297"/>
    </location>
</feature>
<feature type="compositionally biased region" description="Acidic residues" evidence="4">
    <location>
        <begin position="386"/>
        <end position="400"/>
    </location>
</feature>
<feature type="compositionally biased region" description="Basic and acidic residues" evidence="4">
    <location>
        <begin position="401"/>
        <end position="410"/>
    </location>
</feature>
<protein>
    <recommendedName>
        <fullName>Dynein regulatory complex subunit 7</fullName>
    </recommendedName>
    <alternativeName>
        <fullName>Coiled-coil domain-containing protein 135</fullName>
    </alternativeName>
    <alternativeName>
        <fullName>Coiled-coil domain-containing protein lobo homolog</fullName>
    </alternativeName>
</protein>